<evidence type="ECO:0000255" key="1">
    <source>
        <dbReference type="HAMAP-Rule" id="MF_00446"/>
    </source>
</evidence>
<sequence>MLVTLMKAKLHRATVTQADLDYEGSIAIDRDLLDASGILPHEQVDVLNITTGARFTTYAIEAPRGSKVIGVNGAAARLVQKGDKVIVVTYGMLPAEEARNYAPTVVLLDDGNEIKKAA</sequence>
<proteinExistence type="inferred from homology"/>
<gene>
    <name evidence="1" type="primary">panD</name>
    <name type="ordered locus">PHZ_c2569</name>
</gene>
<comment type="function">
    <text evidence="1">Catalyzes the pyruvoyl-dependent decarboxylation of aspartate to produce beta-alanine.</text>
</comment>
<comment type="catalytic activity">
    <reaction evidence="1">
        <text>L-aspartate + H(+) = beta-alanine + CO2</text>
        <dbReference type="Rhea" id="RHEA:19497"/>
        <dbReference type="ChEBI" id="CHEBI:15378"/>
        <dbReference type="ChEBI" id="CHEBI:16526"/>
        <dbReference type="ChEBI" id="CHEBI:29991"/>
        <dbReference type="ChEBI" id="CHEBI:57966"/>
        <dbReference type="EC" id="4.1.1.11"/>
    </reaction>
</comment>
<comment type="cofactor">
    <cofactor evidence="1">
        <name>pyruvate</name>
        <dbReference type="ChEBI" id="CHEBI:15361"/>
    </cofactor>
    <text evidence="1">Binds 1 pyruvoyl group covalently per subunit.</text>
</comment>
<comment type="pathway">
    <text evidence="1">Cofactor biosynthesis; (R)-pantothenate biosynthesis; beta-alanine from L-aspartate: step 1/1.</text>
</comment>
<comment type="subunit">
    <text evidence="1">Heterooctamer of four alpha and four beta subunits.</text>
</comment>
<comment type="subcellular location">
    <subcellularLocation>
        <location evidence="1">Cytoplasm</location>
    </subcellularLocation>
</comment>
<comment type="PTM">
    <text evidence="1">Is synthesized initially as an inactive proenzyme, which is activated by self-cleavage at a specific serine bond to produce a beta-subunit with a hydroxyl group at its C-terminus and an alpha-subunit with a pyruvoyl group at its N-terminus.</text>
</comment>
<comment type="similarity">
    <text evidence="1">Belongs to the PanD family.</text>
</comment>
<accession>B4RH30</accession>
<dbReference type="EC" id="4.1.1.11" evidence="1"/>
<dbReference type="EMBL" id="CP000747">
    <property type="protein sequence ID" value="ACG78978.1"/>
    <property type="molecule type" value="Genomic_DNA"/>
</dbReference>
<dbReference type="RefSeq" id="WP_012523116.1">
    <property type="nucleotide sequence ID" value="NC_011144.1"/>
</dbReference>
<dbReference type="SMR" id="B4RH30"/>
<dbReference type="STRING" id="450851.PHZ_c2569"/>
<dbReference type="KEGG" id="pzu:PHZ_c2569"/>
<dbReference type="eggNOG" id="COG0853">
    <property type="taxonomic scope" value="Bacteria"/>
</dbReference>
<dbReference type="HOGENOM" id="CLU_115305_2_1_5"/>
<dbReference type="OrthoDB" id="9803983at2"/>
<dbReference type="UniPathway" id="UPA00028">
    <property type="reaction ID" value="UER00002"/>
</dbReference>
<dbReference type="Proteomes" id="UP000001868">
    <property type="component" value="Chromosome"/>
</dbReference>
<dbReference type="GO" id="GO:0005829">
    <property type="term" value="C:cytosol"/>
    <property type="evidence" value="ECO:0007669"/>
    <property type="project" value="TreeGrafter"/>
</dbReference>
<dbReference type="GO" id="GO:0004068">
    <property type="term" value="F:aspartate 1-decarboxylase activity"/>
    <property type="evidence" value="ECO:0007669"/>
    <property type="project" value="UniProtKB-UniRule"/>
</dbReference>
<dbReference type="GO" id="GO:0006523">
    <property type="term" value="P:alanine biosynthetic process"/>
    <property type="evidence" value="ECO:0007669"/>
    <property type="project" value="InterPro"/>
</dbReference>
<dbReference type="GO" id="GO:0015940">
    <property type="term" value="P:pantothenate biosynthetic process"/>
    <property type="evidence" value="ECO:0007669"/>
    <property type="project" value="UniProtKB-UniRule"/>
</dbReference>
<dbReference type="CDD" id="cd06919">
    <property type="entry name" value="Asp_decarbox"/>
    <property type="match status" value="1"/>
</dbReference>
<dbReference type="Gene3D" id="2.40.40.20">
    <property type="match status" value="1"/>
</dbReference>
<dbReference type="HAMAP" id="MF_00446">
    <property type="entry name" value="PanD"/>
    <property type="match status" value="1"/>
</dbReference>
<dbReference type="InterPro" id="IPR009010">
    <property type="entry name" value="Asp_de-COase-like_dom_sf"/>
</dbReference>
<dbReference type="InterPro" id="IPR003190">
    <property type="entry name" value="Asp_decarbox"/>
</dbReference>
<dbReference type="NCBIfam" id="TIGR00223">
    <property type="entry name" value="panD"/>
    <property type="match status" value="1"/>
</dbReference>
<dbReference type="PANTHER" id="PTHR21012">
    <property type="entry name" value="ASPARTATE 1-DECARBOXYLASE"/>
    <property type="match status" value="1"/>
</dbReference>
<dbReference type="PANTHER" id="PTHR21012:SF0">
    <property type="entry name" value="ASPARTATE 1-DECARBOXYLASE"/>
    <property type="match status" value="1"/>
</dbReference>
<dbReference type="Pfam" id="PF02261">
    <property type="entry name" value="Asp_decarbox"/>
    <property type="match status" value="1"/>
</dbReference>
<dbReference type="PIRSF" id="PIRSF006246">
    <property type="entry name" value="Asp_decarbox"/>
    <property type="match status" value="1"/>
</dbReference>
<dbReference type="SUPFAM" id="SSF50692">
    <property type="entry name" value="ADC-like"/>
    <property type="match status" value="1"/>
</dbReference>
<feature type="chain" id="PRO_1000124851" description="Aspartate 1-decarboxylase beta chain" evidence="1">
    <location>
        <begin position="1"/>
        <end position="24"/>
    </location>
</feature>
<feature type="chain" id="PRO_1000124852" description="Aspartate 1-decarboxylase alpha chain" evidence="1">
    <location>
        <begin position="25"/>
        <end position="118"/>
    </location>
</feature>
<feature type="active site" description="Schiff-base intermediate with substrate; via pyruvic acid" evidence="1">
    <location>
        <position position="25"/>
    </location>
</feature>
<feature type="active site" description="Proton donor" evidence="1">
    <location>
        <position position="58"/>
    </location>
</feature>
<feature type="binding site" evidence="1">
    <location>
        <position position="57"/>
    </location>
    <ligand>
        <name>substrate</name>
    </ligand>
</feature>
<feature type="binding site" evidence="1">
    <location>
        <begin position="73"/>
        <end position="75"/>
    </location>
    <ligand>
        <name>substrate</name>
    </ligand>
</feature>
<feature type="modified residue" description="Pyruvic acid (Ser)" evidence="1">
    <location>
        <position position="25"/>
    </location>
</feature>
<reference key="1">
    <citation type="journal article" date="2008" name="BMC Genomics">
        <title>Complete genome of Phenylobacterium zucineum - a novel facultative intracellular bacterium isolated from human erythroleukemia cell line K562.</title>
        <authorList>
            <person name="Luo Y."/>
            <person name="Xu X."/>
            <person name="Ding Z."/>
            <person name="Liu Z."/>
            <person name="Zhang B."/>
            <person name="Yan Z."/>
            <person name="Sun J."/>
            <person name="Hu S."/>
            <person name="Hu X."/>
        </authorList>
    </citation>
    <scope>NUCLEOTIDE SEQUENCE [LARGE SCALE GENOMIC DNA]</scope>
    <source>
        <strain>HLK1</strain>
    </source>
</reference>
<organism>
    <name type="scientific">Phenylobacterium zucineum (strain HLK1)</name>
    <dbReference type="NCBI Taxonomy" id="450851"/>
    <lineage>
        <taxon>Bacteria</taxon>
        <taxon>Pseudomonadati</taxon>
        <taxon>Pseudomonadota</taxon>
        <taxon>Alphaproteobacteria</taxon>
        <taxon>Caulobacterales</taxon>
        <taxon>Caulobacteraceae</taxon>
        <taxon>Phenylobacterium</taxon>
    </lineage>
</organism>
<name>PAND_PHEZH</name>
<protein>
    <recommendedName>
        <fullName evidence="1">Aspartate 1-decarboxylase</fullName>
        <ecNumber evidence="1">4.1.1.11</ecNumber>
    </recommendedName>
    <alternativeName>
        <fullName evidence="1">Aspartate alpha-decarboxylase</fullName>
    </alternativeName>
    <component>
        <recommendedName>
            <fullName evidence="1">Aspartate 1-decarboxylase beta chain</fullName>
        </recommendedName>
    </component>
    <component>
        <recommendedName>
            <fullName evidence="1">Aspartate 1-decarboxylase alpha chain</fullName>
        </recommendedName>
    </component>
</protein>
<keyword id="KW-0068">Autocatalytic cleavage</keyword>
<keyword id="KW-0963">Cytoplasm</keyword>
<keyword id="KW-0210">Decarboxylase</keyword>
<keyword id="KW-0456">Lyase</keyword>
<keyword id="KW-0566">Pantothenate biosynthesis</keyword>
<keyword id="KW-0670">Pyruvate</keyword>
<keyword id="KW-1185">Reference proteome</keyword>
<keyword id="KW-0704">Schiff base</keyword>
<keyword id="KW-0865">Zymogen</keyword>